<name>ADD_VIBVU</name>
<dbReference type="EC" id="3.5.4.4" evidence="1"/>
<dbReference type="EMBL" id="AE016796">
    <property type="protein sequence ID" value="AAO07421.1"/>
    <property type="molecule type" value="Genomic_DNA"/>
</dbReference>
<dbReference type="RefSeq" id="WP_011081421.1">
    <property type="nucleotide sequence ID" value="NC_004460.2"/>
</dbReference>
<dbReference type="SMR" id="Q8D6Q8"/>
<dbReference type="KEGG" id="vvu:VV2_0468"/>
<dbReference type="HOGENOM" id="CLU_039228_0_0_6"/>
<dbReference type="Proteomes" id="UP000002275">
    <property type="component" value="Chromosome 2"/>
</dbReference>
<dbReference type="GO" id="GO:0005829">
    <property type="term" value="C:cytosol"/>
    <property type="evidence" value="ECO:0007669"/>
    <property type="project" value="TreeGrafter"/>
</dbReference>
<dbReference type="GO" id="GO:0046936">
    <property type="term" value="F:2'-deoxyadenosine deaminase activity"/>
    <property type="evidence" value="ECO:0007669"/>
    <property type="project" value="RHEA"/>
</dbReference>
<dbReference type="GO" id="GO:0004000">
    <property type="term" value="F:adenosine deaminase activity"/>
    <property type="evidence" value="ECO:0007669"/>
    <property type="project" value="UniProtKB-UniRule"/>
</dbReference>
<dbReference type="GO" id="GO:0008270">
    <property type="term" value="F:zinc ion binding"/>
    <property type="evidence" value="ECO:0007669"/>
    <property type="project" value="UniProtKB-UniRule"/>
</dbReference>
<dbReference type="GO" id="GO:0006154">
    <property type="term" value="P:adenosine catabolic process"/>
    <property type="evidence" value="ECO:0007669"/>
    <property type="project" value="TreeGrafter"/>
</dbReference>
<dbReference type="GO" id="GO:0043103">
    <property type="term" value="P:hypoxanthine salvage"/>
    <property type="evidence" value="ECO:0007669"/>
    <property type="project" value="TreeGrafter"/>
</dbReference>
<dbReference type="GO" id="GO:0046103">
    <property type="term" value="P:inosine biosynthetic process"/>
    <property type="evidence" value="ECO:0007669"/>
    <property type="project" value="TreeGrafter"/>
</dbReference>
<dbReference type="GO" id="GO:0009117">
    <property type="term" value="P:nucleotide metabolic process"/>
    <property type="evidence" value="ECO:0007669"/>
    <property type="project" value="UniProtKB-KW"/>
</dbReference>
<dbReference type="GO" id="GO:0009168">
    <property type="term" value="P:purine ribonucleoside monophosphate biosynthetic process"/>
    <property type="evidence" value="ECO:0007669"/>
    <property type="project" value="UniProtKB-UniRule"/>
</dbReference>
<dbReference type="CDD" id="cd01320">
    <property type="entry name" value="ADA"/>
    <property type="match status" value="1"/>
</dbReference>
<dbReference type="Gene3D" id="3.20.20.140">
    <property type="entry name" value="Metal-dependent hydrolases"/>
    <property type="match status" value="1"/>
</dbReference>
<dbReference type="HAMAP" id="MF_00540">
    <property type="entry name" value="A_deaminase"/>
    <property type="match status" value="1"/>
</dbReference>
<dbReference type="InterPro" id="IPR028893">
    <property type="entry name" value="A_deaminase"/>
</dbReference>
<dbReference type="InterPro" id="IPR001365">
    <property type="entry name" value="A_deaminase_dom"/>
</dbReference>
<dbReference type="InterPro" id="IPR006330">
    <property type="entry name" value="Ado/ade_deaminase"/>
</dbReference>
<dbReference type="InterPro" id="IPR032466">
    <property type="entry name" value="Metal_Hydrolase"/>
</dbReference>
<dbReference type="NCBIfam" id="TIGR01430">
    <property type="entry name" value="aden_deam"/>
    <property type="match status" value="1"/>
</dbReference>
<dbReference type="PANTHER" id="PTHR11409">
    <property type="entry name" value="ADENOSINE DEAMINASE"/>
    <property type="match status" value="1"/>
</dbReference>
<dbReference type="PANTHER" id="PTHR11409:SF43">
    <property type="entry name" value="ADENOSINE DEAMINASE"/>
    <property type="match status" value="1"/>
</dbReference>
<dbReference type="Pfam" id="PF00962">
    <property type="entry name" value="A_deaminase"/>
    <property type="match status" value="1"/>
</dbReference>
<dbReference type="SUPFAM" id="SSF51556">
    <property type="entry name" value="Metallo-dependent hydrolases"/>
    <property type="match status" value="1"/>
</dbReference>
<organism>
    <name type="scientific">Vibrio vulnificus (strain CMCP6)</name>
    <dbReference type="NCBI Taxonomy" id="216895"/>
    <lineage>
        <taxon>Bacteria</taxon>
        <taxon>Pseudomonadati</taxon>
        <taxon>Pseudomonadota</taxon>
        <taxon>Gammaproteobacteria</taxon>
        <taxon>Vibrionales</taxon>
        <taxon>Vibrionaceae</taxon>
        <taxon>Vibrio</taxon>
    </lineage>
</organism>
<accession>Q8D6Q8</accession>
<sequence>MNYFDLPKIDLHCHLDGSVRPQTIIDLADEQNLTLPSRDINVIKEMMVAPETCPNLDEYLKRFELPGMVMQTAEALERISFELFEDAANENVKYLEVRFGPLLHQVKGLSLDDIMDSVVRGMKRAEAQYDIHGNYILSILRTMPKDQIKAVLEAGAKHLNDGIVAFDLAGSEVPGFCHEFVPYAQYAKELGYRITIHAGEQGAGQNVYDAISLLGAERVGHGIFIHNHPEAYQLVKGEEVALETCPSSNVQTKAVNSLSEHPIKAFYKDGIAVTINTDNRTVSNTTMTDEVRKVVEAFELTEAEYFDIYTISVNNAFTSDAVKQHLLSFAQ</sequence>
<keyword id="KW-0378">Hydrolase</keyword>
<keyword id="KW-0479">Metal-binding</keyword>
<keyword id="KW-0546">Nucleotide metabolism</keyword>
<keyword id="KW-0862">Zinc</keyword>
<comment type="function">
    <text evidence="1">Catalyzes the hydrolytic deamination of adenosine and 2-deoxyadenosine.</text>
</comment>
<comment type="catalytic activity">
    <reaction evidence="1">
        <text>adenosine + H2O + H(+) = inosine + NH4(+)</text>
        <dbReference type="Rhea" id="RHEA:24408"/>
        <dbReference type="ChEBI" id="CHEBI:15377"/>
        <dbReference type="ChEBI" id="CHEBI:15378"/>
        <dbReference type="ChEBI" id="CHEBI:16335"/>
        <dbReference type="ChEBI" id="CHEBI:17596"/>
        <dbReference type="ChEBI" id="CHEBI:28938"/>
        <dbReference type="EC" id="3.5.4.4"/>
    </reaction>
    <physiologicalReaction direction="left-to-right" evidence="1">
        <dbReference type="Rhea" id="RHEA:24409"/>
    </physiologicalReaction>
</comment>
<comment type="catalytic activity">
    <reaction evidence="1">
        <text>2'-deoxyadenosine + H2O + H(+) = 2'-deoxyinosine + NH4(+)</text>
        <dbReference type="Rhea" id="RHEA:28190"/>
        <dbReference type="ChEBI" id="CHEBI:15377"/>
        <dbReference type="ChEBI" id="CHEBI:15378"/>
        <dbReference type="ChEBI" id="CHEBI:17256"/>
        <dbReference type="ChEBI" id="CHEBI:28938"/>
        <dbReference type="ChEBI" id="CHEBI:28997"/>
        <dbReference type="EC" id="3.5.4.4"/>
    </reaction>
    <physiologicalReaction direction="left-to-right" evidence="1">
        <dbReference type="Rhea" id="RHEA:28191"/>
    </physiologicalReaction>
</comment>
<comment type="cofactor">
    <cofactor evidence="1">
        <name>Zn(2+)</name>
        <dbReference type="ChEBI" id="CHEBI:29105"/>
    </cofactor>
    <text evidence="1">Binds 1 zinc ion per subunit.</text>
</comment>
<comment type="similarity">
    <text evidence="1">Belongs to the metallo-dependent hydrolases superfamily. Adenosine and AMP deaminases family. Adenosine deaminase subfamily.</text>
</comment>
<protein>
    <recommendedName>
        <fullName evidence="1">Adenosine deaminase</fullName>
        <ecNumber evidence="1">3.5.4.4</ecNumber>
    </recommendedName>
    <alternativeName>
        <fullName evidence="1">Adenosine aminohydrolase</fullName>
    </alternativeName>
</protein>
<feature type="chain" id="PRO_0000194400" description="Adenosine deaminase">
    <location>
        <begin position="1"/>
        <end position="331"/>
    </location>
</feature>
<feature type="active site" description="Proton donor" evidence="1">
    <location>
        <position position="200"/>
    </location>
</feature>
<feature type="binding site" evidence="1">
    <location>
        <position position="12"/>
    </location>
    <ligand>
        <name>Zn(2+)</name>
        <dbReference type="ChEBI" id="CHEBI:29105"/>
        <note>catalytic</note>
    </ligand>
</feature>
<feature type="binding site" evidence="1">
    <location>
        <position position="14"/>
    </location>
    <ligand>
        <name>substrate</name>
    </ligand>
</feature>
<feature type="binding site" evidence="1">
    <location>
        <position position="14"/>
    </location>
    <ligand>
        <name>Zn(2+)</name>
        <dbReference type="ChEBI" id="CHEBI:29105"/>
        <note>catalytic</note>
    </ligand>
</feature>
<feature type="binding site" evidence="1">
    <location>
        <position position="16"/>
    </location>
    <ligand>
        <name>substrate</name>
    </ligand>
</feature>
<feature type="binding site" evidence="1">
    <location>
        <position position="170"/>
    </location>
    <ligand>
        <name>substrate</name>
    </ligand>
</feature>
<feature type="binding site" evidence="1">
    <location>
        <position position="197"/>
    </location>
    <ligand>
        <name>Zn(2+)</name>
        <dbReference type="ChEBI" id="CHEBI:29105"/>
        <note>catalytic</note>
    </ligand>
</feature>
<feature type="binding site" evidence="1">
    <location>
        <position position="278"/>
    </location>
    <ligand>
        <name>Zn(2+)</name>
        <dbReference type="ChEBI" id="CHEBI:29105"/>
        <note>catalytic</note>
    </ligand>
</feature>
<feature type="site" description="Important for catalytic activity" evidence="1">
    <location>
        <position position="221"/>
    </location>
</feature>
<reference key="1">
    <citation type="submission" date="2002-12" db="EMBL/GenBank/DDBJ databases">
        <title>Complete genome sequence of Vibrio vulnificus CMCP6.</title>
        <authorList>
            <person name="Rhee J.H."/>
            <person name="Kim S.Y."/>
            <person name="Chung S.S."/>
            <person name="Kim J.J."/>
            <person name="Moon Y.H."/>
            <person name="Jeong H."/>
            <person name="Choy H.E."/>
        </authorList>
    </citation>
    <scope>NUCLEOTIDE SEQUENCE [LARGE SCALE GENOMIC DNA]</scope>
    <source>
        <strain>CMCP6</strain>
    </source>
</reference>
<proteinExistence type="inferred from homology"/>
<gene>
    <name evidence="1" type="primary">add</name>
    <name type="ordered locus">VV2_0468</name>
</gene>
<evidence type="ECO:0000255" key="1">
    <source>
        <dbReference type="HAMAP-Rule" id="MF_00540"/>
    </source>
</evidence>